<gene>
    <name type="ordered locus">Pa_6_490</name>
    <name type="ORF">PODANS_6_490</name>
</gene>
<dbReference type="EC" id="3.2.1.78" evidence="4"/>
<dbReference type="EMBL" id="CU638744">
    <property type="protein sequence ID" value="CAP71606.1"/>
    <property type="molecule type" value="Genomic_DNA"/>
</dbReference>
<dbReference type="EMBL" id="FO904941">
    <property type="protein sequence ID" value="CDP31001.1"/>
    <property type="molecule type" value="Genomic_DNA"/>
</dbReference>
<dbReference type="EMBL" id="HM357135">
    <property type="protein sequence ID" value="ADO14134.1"/>
    <property type="molecule type" value="mRNA"/>
</dbReference>
<dbReference type="RefSeq" id="XP_001910471.1">
    <property type="nucleotide sequence ID" value="XM_001910436.1"/>
</dbReference>
<dbReference type="PDB" id="3ZIZ">
    <property type="method" value="X-ray"/>
    <property type="resolution" value="1.40 A"/>
    <property type="chains" value="A=18-373"/>
</dbReference>
<dbReference type="PDBsum" id="3ZIZ"/>
<dbReference type="SMR" id="B2B3C0"/>
<dbReference type="STRING" id="515849.B2B3C0"/>
<dbReference type="CAZy" id="GH5">
    <property type="family name" value="Glycoside Hydrolase Family 5"/>
</dbReference>
<dbReference type="GeneID" id="6194921"/>
<dbReference type="KEGG" id="pan:PODANSg7509"/>
<dbReference type="VEuPathDB" id="FungiDB:PODANS_6_490"/>
<dbReference type="eggNOG" id="ENOG502QS4Q">
    <property type="taxonomic scope" value="Eukaryota"/>
</dbReference>
<dbReference type="HOGENOM" id="CLU_031603_4_1_1"/>
<dbReference type="InParanoid" id="B2B3C0"/>
<dbReference type="OrthoDB" id="406631at2759"/>
<dbReference type="BRENDA" id="3.2.1.78">
    <property type="organism ID" value="4930"/>
</dbReference>
<dbReference type="EvolutionaryTrace" id="B2B3C0"/>
<dbReference type="Proteomes" id="UP000001197">
    <property type="component" value="Chromosome 6"/>
</dbReference>
<dbReference type="GO" id="GO:0005576">
    <property type="term" value="C:extracellular region"/>
    <property type="evidence" value="ECO:0007669"/>
    <property type="project" value="UniProtKB-SubCell"/>
</dbReference>
<dbReference type="GO" id="GO:0016985">
    <property type="term" value="F:mannan endo-1,4-beta-mannosidase activity"/>
    <property type="evidence" value="ECO:0007669"/>
    <property type="project" value="UniProtKB-EC"/>
</dbReference>
<dbReference type="GO" id="GO:0046355">
    <property type="term" value="P:mannan catabolic process"/>
    <property type="evidence" value="ECO:0007669"/>
    <property type="project" value="UniProtKB-ARBA"/>
</dbReference>
<dbReference type="FunFam" id="3.20.20.80:FF:000076">
    <property type="entry name" value="Mannan endo-1,4-beta-mannosidase A"/>
    <property type="match status" value="1"/>
</dbReference>
<dbReference type="Gene3D" id="3.20.20.80">
    <property type="entry name" value="Glycosidases"/>
    <property type="match status" value="1"/>
</dbReference>
<dbReference type="InterPro" id="IPR001547">
    <property type="entry name" value="Glyco_hydro_5"/>
</dbReference>
<dbReference type="InterPro" id="IPR017853">
    <property type="entry name" value="Glycoside_hydrolase_SF"/>
</dbReference>
<dbReference type="InterPro" id="IPR045053">
    <property type="entry name" value="MAN-like"/>
</dbReference>
<dbReference type="PANTHER" id="PTHR31451">
    <property type="match status" value="1"/>
</dbReference>
<dbReference type="PANTHER" id="PTHR31451:SF39">
    <property type="entry name" value="MANNAN ENDO-1,4-BETA-MANNOSIDASE 1"/>
    <property type="match status" value="1"/>
</dbReference>
<dbReference type="Pfam" id="PF00150">
    <property type="entry name" value="Cellulase"/>
    <property type="match status" value="1"/>
</dbReference>
<dbReference type="SUPFAM" id="SSF51445">
    <property type="entry name" value="(Trans)glycosidases"/>
    <property type="match status" value="1"/>
</dbReference>
<reference key="1">
    <citation type="journal article" date="2008" name="Genome Biol.">
        <title>The genome sequence of the model ascomycete fungus Podospora anserina.</title>
        <authorList>
            <person name="Espagne E."/>
            <person name="Lespinet O."/>
            <person name="Malagnac F."/>
            <person name="Da Silva C."/>
            <person name="Jaillon O."/>
            <person name="Porcel B.M."/>
            <person name="Couloux A."/>
            <person name="Aury J.-M."/>
            <person name="Segurens B."/>
            <person name="Poulain J."/>
            <person name="Anthouard V."/>
            <person name="Grossetete S."/>
            <person name="Khalili H."/>
            <person name="Coppin E."/>
            <person name="Dequard-Chablat M."/>
            <person name="Picard M."/>
            <person name="Contamine V."/>
            <person name="Arnaise S."/>
            <person name="Bourdais A."/>
            <person name="Berteaux-Lecellier V."/>
            <person name="Gautheret D."/>
            <person name="de Vries R.P."/>
            <person name="Battaglia E."/>
            <person name="Coutinho P.M."/>
            <person name="Danchin E.G.J."/>
            <person name="Henrissat B."/>
            <person name="El Khoury R."/>
            <person name="Sainsard-Chanet A."/>
            <person name="Boivin A."/>
            <person name="Pinan-Lucarre B."/>
            <person name="Sellem C.H."/>
            <person name="Debuchy R."/>
            <person name="Wincker P."/>
            <person name="Weissenbach J."/>
            <person name="Silar P."/>
        </authorList>
    </citation>
    <scope>NUCLEOTIDE SEQUENCE [LARGE SCALE GENOMIC DNA]</scope>
    <source>
        <strain>S / ATCC MYA-4624 / DSM 980 / FGSC 10383</strain>
    </source>
</reference>
<reference key="2">
    <citation type="journal article" date="2014" name="Genetics">
        <title>Maintaining two mating types: Structure of the mating type locus and its role in heterokaryosis in Podospora anserina.</title>
        <authorList>
            <person name="Grognet P."/>
            <person name="Bidard F."/>
            <person name="Kuchly C."/>
            <person name="Tong L.C.H."/>
            <person name="Coppin E."/>
            <person name="Benkhali J.A."/>
            <person name="Couloux A."/>
            <person name="Wincker P."/>
            <person name="Debuchy R."/>
            <person name="Silar P."/>
        </authorList>
    </citation>
    <scope>GENOME REANNOTATION</scope>
    <source>
        <strain>S / ATCC MYA-4624 / DSM 980 / FGSC 10383</strain>
    </source>
</reference>
<reference key="3">
    <citation type="journal article" date="2011" name="Appl. Environ. Microbiol.">
        <title>Podospora anserina hemicellulases potentiate the Trichoderma reesei secretome for saccharification of lignocellulosic biomass.</title>
        <authorList>
            <person name="Couturier M."/>
            <person name="Haon M."/>
            <person name="Coutinho P.M."/>
            <person name="Henrissat B."/>
            <person name="Lesage-Meessen L."/>
            <person name="Berrin J.G."/>
        </authorList>
    </citation>
    <scope>NUCLEOTIDE SEQUENCE [MRNA] OF 18-373</scope>
    <scope>FUNCTION</scope>
    <scope>CATALYTIC ACTIVITY</scope>
    <scope>BIOPHYSICOCHEMICAL PROPERTIES</scope>
    <source>
        <strain>S / ATCC MYA-4624 / DSM 980 / FGSC 10383</strain>
    </source>
</reference>
<reference evidence="8" key="4">
    <citation type="journal article" date="2013" name="J. Biol. Chem.">
        <title>Structural and biochemical analyses of glycoside hydrolase families 5 and 26 beta-(1,4)-mannanases from Podospora anserina reveal differences upon manno-oligosaccharide catalysis.</title>
        <authorList>
            <person name="Couturier M."/>
            <person name="Roussel A."/>
            <person name="Rosengren A."/>
            <person name="Leone P."/>
            <person name="Stalbrand H."/>
            <person name="Berrin J.G."/>
        </authorList>
    </citation>
    <scope>X-RAY CRYSTALLOGRAPHY (1.40 ANGSTROMS)</scope>
    <scope>FUNCTION</scope>
    <scope>DISULFIDE BONDS</scope>
    <scope>SUBUNIT</scope>
    <scope>ACTIVE SITE</scope>
    <scope>MUTAGENESIS OF GLU-194 AND GLU-300</scope>
</reference>
<protein>
    <recommendedName>
        <fullName>Mannan endo-1,4-beta-mannosidase A</fullName>
        <ecNumber evidence="4">3.2.1.78</ecNumber>
    </recommendedName>
    <alternativeName>
        <fullName>Endo-beta-1,4-mannanase A</fullName>
    </alternativeName>
    <alternativeName>
        <fullName>Man5A</fullName>
    </alternativeName>
</protein>
<feature type="signal peptide" evidence="3">
    <location>
        <begin position="1"/>
        <end position="17"/>
    </location>
</feature>
<feature type="chain" id="PRO_5007639352" description="Mannan endo-1,4-beta-mannosidase A">
    <location>
        <begin position="18"/>
        <end position="373"/>
    </location>
</feature>
<feature type="active site" description="Proton donor/acceptor" evidence="7">
    <location>
        <position position="194"/>
    </location>
</feature>
<feature type="active site" description="Nucleophile" evidence="7">
    <location>
        <position position="300"/>
    </location>
</feature>
<feature type="binding site" evidence="1">
    <location>
        <position position="81"/>
    </location>
    <ligand>
        <name>substrate</name>
    </ligand>
</feature>
<feature type="binding site" evidence="1">
    <location>
        <position position="193"/>
    </location>
    <ligand>
        <name>substrate</name>
    </ligand>
</feature>
<feature type="binding site" evidence="2">
    <location>
        <begin position="194"/>
        <end position="196"/>
    </location>
    <ligand>
        <name>substrate</name>
    </ligand>
</feature>
<feature type="binding site" evidence="2">
    <location>
        <position position="230"/>
    </location>
    <ligand>
        <name>substrate</name>
    </ligand>
</feature>
<feature type="binding site" evidence="1">
    <location>
        <position position="267"/>
    </location>
    <ligand>
        <name>substrate</name>
    </ligand>
</feature>
<feature type="binding site" evidence="2">
    <location>
        <position position="271"/>
    </location>
    <ligand>
        <name>substrate</name>
    </ligand>
</feature>
<feature type="binding site" evidence="1">
    <location>
        <position position="332"/>
    </location>
    <ligand>
        <name>substrate</name>
    </ligand>
</feature>
<feature type="disulfide bond" evidence="5 8">
    <location>
        <begin position="197"/>
        <end position="200"/>
    </location>
</feature>
<feature type="disulfide bond" evidence="5 8">
    <location>
        <begin position="289"/>
        <end position="296"/>
    </location>
</feature>
<feature type="disulfide bond" evidence="5 8">
    <location>
        <begin position="308"/>
        <end position="359"/>
    </location>
</feature>
<feature type="mutagenesis site" description="Reduces catalytic activity 100-fold." evidence="5">
    <original>E</original>
    <variation>A</variation>
    <location>
        <position position="194"/>
    </location>
</feature>
<feature type="mutagenesis site" description="Abolishes catalytic activity." evidence="5">
    <original>E</original>
    <variation>A</variation>
    <location>
        <position position="300"/>
    </location>
</feature>
<feature type="strand" evidence="9">
    <location>
        <begin position="30"/>
        <end position="33"/>
    </location>
</feature>
<feature type="strand" evidence="9">
    <location>
        <begin position="36"/>
        <end position="39"/>
    </location>
</feature>
<feature type="strand" evidence="9">
    <location>
        <begin position="42"/>
        <end position="44"/>
    </location>
</feature>
<feature type="strand" evidence="9">
    <location>
        <begin position="46"/>
        <end position="50"/>
    </location>
</feature>
<feature type="helix" evidence="9">
    <location>
        <begin position="54"/>
        <end position="56"/>
    </location>
</feature>
<feature type="helix" evidence="9">
    <location>
        <begin position="60"/>
        <end position="72"/>
    </location>
</feature>
<feature type="strand" evidence="9">
    <location>
        <begin position="77"/>
        <end position="81"/>
    </location>
</feature>
<feature type="strand" evidence="9">
    <location>
        <begin position="85"/>
        <end position="88"/>
    </location>
</feature>
<feature type="strand" evidence="9">
    <location>
        <begin position="97"/>
        <end position="99"/>
    </location>
</feature>
<feature type="turn" evidence="9">
    <location>
        <begin position="102"/>
        <end position="104"/>
    </location>
</feature>
<feature type="turn" evidence="9">
    <location>
        <begin position="111"/>
        <end position="113"/>
    </location>
</feature>
<feature type="helix" evidence="9">
    <location>
        <begin position="114"/>
        <end position="127"/>
    </location>
</feature>
<feature type="strand" evidence="9">
    <location>
        <begin position="130"/>
        <end position="134"/>
    </location>
</feature>
<feature type="strand" evidence="9">
    <location>
        <begin position="137"/>
        <end position="140"/>
    </location>
</feature>
<feature type="helix" evidence="9">
    <location>
        <begin position="144"/>
        <end position="152"/>
    </location>
</feature>
<feature type="helix" evidence="9">
    <location>
        <begin position="157"/>
        <end position="161"/>
    </location>
</feature>
<feature type="helix" evidence="9">
    <location>
        <begin position="163"/>
        <end position="180"/>
    </location>
</feature>
<feature type="strand" evidence="9">
    <location>
        <begin position="186"/>
        <end position="191"/>
    </location>
</feature>
<feature type="helix" evidence="9">
    <location>
        <begin position="203"/>
        <end position="219"/>
    </location>
</feature>
<feature type="strand" evidence="9">
    <location>
        <begin position="221"/>
        <end position="226"/>
    </location>
</feature>
<feature type="helix" evidence="9">
    <location>
        <begin position="240"/>
        <end position="242"/>
    </location>
</feature>
<feature type="helix" evidence="9">
    <location>
        <begin position="250"/>
        <end position="254"/>
    </location>
</feature>
<feature type="strand" evidence="9">
    <location>
        <begin position="261"/>
        <end position="266"/>
    </location>
</feature>
<feature type="helix" evidence="9">
    <location>
        <begin position="268"/>
        <end position="270"/>
    </location>
</feature>
<feature type="helix" evidence="9">
    <location>
        <begin position="275"/>
        <end position="277"/>
    </location>
</feature>
<feature type="helix" evidence="9">
    <location>
        <begin position="278"/>
        <end position="292"/>
    </location>
</feature>
<feature type="strand" evidence="9">
    <location>
        <begin position="296"/>
        <end position="301"/>
    </location>
</feature>
<feature type="strand" evidence="9">
    <location>
        <begin position="304"/>
        <end position="306"/>
    </location>
</feature>
<feature type="helix" evidence="9">
    <location>
        <begin position="307"/>
        <end position="320"/>
    </location>
</feature>
<feature type="turn" evidence="9">
    <location>
        <begin position="321"/>
        <end position="325"/>
    </location>
</feature>
<feature type="strand" evidence="9">
    <location>
        <begin position="326"/>
        <end position="332"/>
    </location>
</feature>
<feature type="helix" evidence="9">
    <location>
        <begin position="355"/>
        <end position="360"/>
    </location>
</feature>
<feature type="helix" evidence="9">
    <location>
        <begin position="362"/>
        <end position="369"/>
    </location>
</feature>
<organism>
    <name type="scientific">Podospora anserina (strain S / ATCC MYA-4624 / DSM 980 / FGSC 10383)</name>
    <name type="common">Pleurage anserina</name>
    <dbReference type="NCBI Taxonomy" id="515849"/>
    <lineage>
        <taxon>Eukaryota</taxon>
        <taxon>Fungi</taxon>
        <taxon>Dikarya</taxon>
        <taxon>Ascomycota</taxon>
        <taxon>Pezizomycotina</taxon>
        <taxon>Sordariomycetes</taxon>
        <taxon>Sordariomycetidae</taxon>
        <taxon>Sordariales</taxon>
        <taxon>Podosporaceae</taxon>
        <taxon>Podospora</taxon>
        <taxon>Podospora anserina</taxon>
    </lineage>
</organism>
<evidence type="ECO:0000250" key="1">
    <source>
        <dbReference type="UniProtKB" id="B4XC07"/>
    </source>
</evidence>
<evidence type="ECO:0000250" key="2">
    <source>
        <dbReference type="UniProtKB" id="Q99036"/>
    </source>
</evidence>
<evidence type="ECO:0000255" key="3"/>
<evidence type="ECO:0000269" key="4">
    <source>
    </source>
</evidence>
<evidence type="ECO:0000269" key="5">
    <source>
    </source>
</evidence>
<evidence type="ECO:0000305" key="6"/>
<evidence type="ECO:0000305" key="7">
    <source>
    </source>
</evidence>
<evidence type="ECO:0007744" key="8">
    <source>
        <dbReference type="PDB" id="3ZIZ"/>
    </source>
</evidence>
<evidence type="ECO:0007829" key="9">
    <source>
        <dbReference type="PDB" id="3ZIZ"/>
    </source>
</evidence>
<accession>B2B3C0</accession>
<accession>E2GHW1</accession>
<comment type="function">
    <text evidence="4 5">Endo-1,4-mannanase that catalyzes the random hydrolysis of (1-&gt;4)-beta-D-mannosidic linkages in mannans and heteromannans. It is a crucial enzyme for depolymerization of seed galactomannans and wood galactoglucomannans. Hydrolyzes structurally different mannan polysaccharides, such as galactomannans, glucomannans, and beta-1,4-mannans from different sources, yielding principally mannobiose (PubMed:21037302). Also has transglycosylation activity (PubMed:23558681).</text>
</comment>
<comment type="catalytic activity">
    <reaction evidence="4">
        <text>Random hydrolysis of (1-&gt;4)-beta-D-mannosidic linkages in mannans, galactomannans and glucomannans.</text>
        <dbReference type="EC" id="3.2.1.78"/>
    </reaction>
</comment>
<comment type="biophysicochemical properties">
    <kinetics>
        <KM evidence="4">0.7 mg/ml for konjac glucomannan</KM>
        <KM evidence="4">1.7 mg/ml for carob galactomannan</KM>
        <KM evidence="4">4.7 mg/ml for locust bean gum galactomannan</KM>
        <KM evidence="4">1.6 mg/ml for ivory nut mannan</KM>
    </kinetics>
    <phDependence>
        <text evidence="4">Optimum pH is 4.0.</text>
    </phDependence>
    <temperatureDependence>
        <text evidence="4">Optimum temperature is 60 degrees Celsius.</text>
    </temperatureDependence>
</comment>
<comment type="subunit">
    <text evidence="5">Monomer.</text>
</comment>
<comment type="subcellular location">
    <subcellularLocation>
        <location evidence="2">Secreted</location>
    </subcellularLocation>
</comment>
<comment type="PTM">
    <text evidence="5">Not glycosylated.</text>
</comment>
<comment type="similarity">
    <text evidence="6">Belongs to the glycosyl hydrolase 5 (cellulase A) family.</text>
</comment>
<sequence length="373" mass="41183">MKGLFAFGLGLLSLVNALPQAQGGGAAASAKVSGTRFVIDGKTGYFAGTNSYWIGFLTNNRDVDTTLDHIASSGLKILRVWGFNDVNNQPSGNTVWFQRLASSGSQINTGPNGLQRLDYLVRSAETRGIKLIIALVNYWDDFGGMKAYVNAFGGTKESWYTNARAQEQYKRYIQAVVSRYVNSPAIFAWELANEPRCKGCNTNVIFNWATQISDYIRSLDKDHLITLGDEGFGLPGQTTYPYQYGEGTDFVKNLQIKNLDFGTFHMYPGHWGVPTSFGPGWIKDHAAACRAAGKPCLLEEYGYESDRCNVQKGWQQASRELSRDGMSGDLFWQWGDQLSTGQTHNDGFTIYYGSSLATCLVTDHVRAINALPA</sequence>
<proteinExistence type="evidence at protein level"/>
<keyword id="KW-0002">3D-structure</keyword>
<keyword id="KW-1015">Disulfide bond</keyword>
<keyword id="KW-0326">Glycosidase</keyword>
<keyword id="KW-0378">Hydrolase</keyword>
<keyword id="KW-1185">Reference proteome</keyword>
<keyword id="KW-0964">Secreted</keyword>
<keyword id="KW-0732">Signal</keyword>
<name>MANA_PODAN</name>